<name>VPS45_YEAST</name>
<feature type="chain" id="PRO_0000206316" description="Vacuolar protein sorting-associated protein 45">
    <location>
        <begin position="1"/>
        <end position="577"/>
    </location>
</feature>
<feature type="sequence conflict" description="In Ref. 1; AAA79230." evidence="6" ref="1">
    <original>F</original>
    <variation>S</variation>
    <location>
        <position position="136"/>
    </location>
</feature>
<feature type="sequence conflict" description="In Ref. 1; AAA79230." evidence="6" ref="1">
    <original>P</original>
    <variation>T</variation>
    <location>
        <position position="239"/>
    </location>
</feature>
<organism>
    <name type="scientific">Saccharomyces cerevisiae (strain ATCC 204508 / S288c)</name>
    <name type="common">Baker's yeast</name>
    <dbReference type="NCBI Taxonomy" id="559292"/>
    <lineage>
        <taxon>Eukaryota</taxon>
        <taxon>Fungi</taxon>
        <taxon>Dikarya</taxon>
        <taxon>Ascomycota</taxon>
        <taxon>Saccharomycotina</taxon>
        <taxon>Saccharomycetes</taxon>
        <taxon>Saccharomycetales</taxon>
        <taxon>Saccharomycetaceae</taxon>
        <taxon>Saccharomyces</taxon>
    </lineage>
</organism>
<reference key="1">
    <citation type="journal article" date="1994" name="Eur. J. Cell Biol.">
        <title>Yeast Vps45p is a Sec1p-like protein required for the consumption of vacuole-targeted, post-Golgi transport vesicles.</title>
        <authorList>
            <person name="Piper R.C."/>
            <person name="Whitters E.A."/>
            <person name="Stevens T.H."/>
        </authorList>
    </citation>
    <scope>NUCLEOTIDE SEQUENCE [GENOMIC DNA]</scope>
</reference>
<reference key="2">
    <citation type="journal article" date="1995" name="Gene">
        <title>STT10, a novel class-D VPS yeast gene required for osmotic integrity related to the PKC1/STT1 protein kinase pathway.</title>
        <authorList>
            <person name="Yoshida S."/>
            <person name="Ohya Y."/>
            <person name="Hirose R."/>
            <person name="Nakano A."/>
            <person name="Anraku Y."/>
        </authorList>
    </citation>
    <scope>NUCLEOTIDE SEQUENCE [GENOMIC DNA]</scope>
    <scope>FUNCTION</scope>
    <source>
        <strain>ATCC 204508 / S288c</strain>
    </source>
</reference>
<reference key="3">
    <citation type="journal article" date="1994" name="J. Cell Sci.">
        <title>Mutations in the VPS45 gene, a SEC1 homologue, result in vacuolar protein sorting defects and accumulation of membrane vesicles.</title>
        <authorList>
            <person name="Cowles C.R."/>
            <person name="Emr S.D."/>
            <person name="Horazdovsky B.F."/>
        </authorList>
    </citation>
    <scope>NUCLEOTIDE SEQUENCE [GENOMIC DNA]</scope>
    <source>
        <strain>ATCC 204508 / S288c</strain>
    </source>
</reference>
<reference key="4">
    <citation type="journal article" date="1997" name="Yeast">
        <title>Sequence analysis of 203 kilobases from Saccharomyces cerevisiae chromosome VII.</title>
        <authorList>
            <person name="Rieger M."/>
            <person name="Brueckner M."/>
            <person name="Schaefer M."/>
            <person name="Mueller-Auer S."/>
        </authorList>
    </citation>
    <scope>NUCLEOTIDE SEQUENCE [GENOMIC DNA]</scope>
    <source>
        <strain>ATCC 204508 / S288c</strain>
    </source>
</reference>
<reference key="5">
    <citation type="journal article" date="1997" name="Nature">
        <title>The nucleotide sequence of Saccharomyces cerevisiae chromosome VII.</title>
        <authorList>
            <person name="Tettelin H."/>
            <person name="Agostoni-Carbone M.L."/>
            <person name="Albermann K."/>
            <person name="Albers M."/>
            <person name="Arroyo J."/>
            <person name="Backes U."/>
            <person name="Barreiros T."/>
            <person name="Bertani I."/>
            <person name="Bjourson A.J."/>
            <person name="Brueckner M."/>
            <person name="Bruschi C.V."/>
            <person name="Carignani G."/>
            <person name="Castagnoli L."/>
            <person name="Cerdan E."/>
            <person name="Clemente M.L."/>
            <person name="Coblenz A."/>
            <person name="Coglievina M."/>
            <person name="Coissac E."/>
            <person name="Defoor E."/>
            <person name="Del Bino S."/>
            <person name="Delius H."/>
            <person name="Delneri D."/>
            <person name="de Wergifosse P."/>
            <person name="Dujon B."/>
            <person name="Durand P."/>
            <person name="Entian K.-D."/>
            <person name="Eraso P."/>
            <person name="Escribano V."/>
            <person name="Fabiani L."/>
            <person name="Fartmann B."/>
            <person name="Feroli F."/>
            <person name="Feuermann M."/>
            <person name="Frontali L."/>
            <person name="Garcia-Gonzalez M."/>
            <person name="Garcia-Saez M.I."/>
            <person name="Goffeau A."/>
            <person name="Guerreiro P."/>
            <person name="Hani J."/>
            <person name="Hansen M."/>
            <person name="Hebling U."/>
            <person name="Hernandez K."/>
            <person name="Heumann K."/>
            <person name="Hilger F."/>
            <person name="Hofmann B."/>
            <person name="Indge K.J."/>
            <person name="James C.M."/>
            <person name="Klima R."/>
            <person name="Koetter P."/>
            <person name="Kramer B."/>
            <person name="Kramer W."/>
            <person name="Lauquin G."/>
            <person name="Leuther H."/>
            <person name="Louis E.J."/>
            <person name="Maillier E."/>
            <person name="Marconi A."/>
            <person name="Martegani E."/>
            <person name="Mazon M.J."/>
            <person name="Mazzoni C."/>
            <person name="McReynolds A.D.K."/>
            <person name="Melchioretto P."/>
            <person name="Mewes H.-W."/>
            <person name="Minenkova O."/>
            <person name="Mueller-Auer S."/>
            <person name="Nawrocki A."/>
            <person name="Netter P."/>
            <person name="Neu R."/>
            <person name="Nombela C."/>
            <person name="Oliver S.G."/>
            <person name="Panzeri L."/>
            <person name="Paoluzi S."/>
            <person name="Plevani P."/>
            <person name="Portetelle D."/>
            <person name="Portillo F."/>
            <person name="Potier S."/>
            <person name="Purnelle B."/>
            <person name="Rieger M."/>
            <person name="Riles L."/>
            <person name="Rinaldi T."/>
            <person name="Robben J."/>
            <person name="Rodrigues-Pousada C."/>
            <person name="Rodriguez-Belmonte E."/>
            <person name="Rodriguez-Torres A.M."/>
            <person name="Rose M."/>
            <person name="Ruzzi M."/>
            <person name="Saliola M."/>
            <person name="Sanchez-Perez M."/>
            <person name="Schaefer B."/>
            <person name="Schaefer M."/>
            <person name="Scharfe M."/>
            <person name="Schmidheini T."/>
            <person name="Schreer A."/>
            <person name="Skala J."/>
            <person name="Souciet J.-L."/>
            <person name="Steensma H.Y."/>
            <person name="Talla E."/>
            <person name="Thierry A."/>
            <person name="Vandenbol M."/>
            <person name="van der Aart Q.J.M."/>
            <person name="Van Dyck L."/>
            <person name="Vanoni M."/>
            <person name="Verhasselt P."/>
            <person name="Voet M."/>
            <person name="Volckaert G."/>
            <person name="Wambutt R."/>
            <person name="Watson M.D."/>
            <person name="Weber N."/>
            <person name="Wedler E."/>
            <person name="Wedler H."/>
            <person name="Wipfli P."/>
            <person name="Wolf K."/>
            <person name="Wright L.F."/>
            <person name="Zaccaria P."/>
            <person name="Zimmermann M."/>
            <person name="Zollner A."/>
            <person name="Kleine K."/>
        </authorList>
    </citation>
    <scope>NUCLEOTIDE SEQUENCE [LARGE SCALE GENOMIC DNA]</scope>
    <source>
        <strain>ATCC 204508 / S288c</strain>
    </source>
</reference>
<reference key="6">
    <citation type="journal article" date="2014" name="G3 (Bethesda)">
        <title>The reference genome sequence of Saccharomyces cerevisiae: Then and now.</title>
        <authorList>
            <person name="Engel S.R."/>
            <person name="Dietrich F.S."/>
            <person name="Fisk D.G."/>
            <person name="Binkley G."/>
            <person name="Balakrishnan R."/>
            <person name="Costanzo M.C."/>
            <person name="Dwight S.S."/>
            <person name="Hitz B.C."/>
            <person name="Karra K."/>
            <person name="Nash R.S."/>
            <person name="Weng S."/>
            <person name="Wong E.D."/>
            <person name="Lloyd P."/>
            <person name="Skrzypek M.S."/>
            <person name="Miyasato S.R."/>
            <person name="Simison M."/>
            <person name="Cherry J.M."/>
        </authorList>
    </citation>
    <scope>GENOME REANNOTATION</scope>
    <source>
        <strain>ATCC 204508 / S288c</strain>
    </source>
</reference>
<reference key="7">
    <citation type="journal article" date="1998" name="Eur. J. Cell Biol.">
        <title>The Sec1p homologue Vps45p binds to the syntaxin Tlg2p.</title>
        <authorList>
            <person name="Nichols B.J."/>
            <person name="Holthuis J.C."/>
            <person name="Pelham H.R."/>
        </authorList>
    </citation>
    <scope>INTERACTION WITH TLG2</scope>
</reference>
<reference key="8">
    <citation type="journal article" date="1999" name="Mol. Biol. Cell">
        <title>The phosphatidylinositol 3-phosphate binding protein Vac1p interacts with a Rab GTPase and a Sec1p homologue to facilitate vesicle-mediated vacuolar protein sorting.</title>
        <authorList>
            <person name="Tall G.G."/>
            <person name="Hama H."/>
            <person name="DeWald D.B."/>
            <person name="Horazdovsky B.F."/>
        </authorList>
    </citation>
    <scope>INTERACTION WITH PEP7</scope>
</reference>
<reference key="9">
    <citation type="journal article" date="2003" name="J. Cell Biol.">
        <title>The Sec1p/Munc18 (SM) protein, Vps45p, cycles on and off membranes during vesicle transport.</title>
        <authorList>
            <person name="Bryant N.J."/>
            <person name="James D.E."/>
        </authorList>
    </citation>
    <scope>SUBCELLULAR LOCATION</scope>
</reference>
<reference key="10">
    <citation type="journal article" date="2003" name="Nature">
        <title>Global analysis of protein expression in yeast.</title>
        <authorList>
            <person name="Ghaemmaghami S."/>
            <person name="Huh W.-K."/>
            <person name="Bower K."/>
            <person name="Howson R.W."/>
            <person name="Belle A."/>
            <person name="Dephoure N."/>
            <person name="O'Shea E.K."/>
            <person name="Weissman J.S."/>
        </authorList>
    </citation>
    <scope>LEVEL OF PROTEIN EXPRESSION [LARGE SCALE ANALYSIS]</scope>
</reference>
<protein>
    <recommendedName>
        <fullName>Vacuolar protein sorting-associated protein 45</fullName>
    </recommendedName>
</protein>
<proteinExistence type="evidence at protein level"/>
<sequence>MNLFDVADFYINKIVTSQSKLSVANVNEHQRIKVLLLDKNTTPTISLCATQSELLKHEIYLVERIENEQREVSRHLRCLVYVKPTEETLQHLLRELRNPRYGEYQIFFSNIVSKSQLERLAESDDLEAVTKVEEIFQDFFILNQDLFSFDLQPREFLSNKLVWSEGGLTKCTNSLVSVLLSLKIKPDIRYEGASKICERLAKEVSYEIGKNERTFFDFPVMDSTPVLLILDRNTDPITPLLQPWTYQSMINEYIGIKRNIVDLSKVPRIDKDLEKVTLSSKQDAFFRDTMYLNFGELGDKVKQYVTTYKDKTQTNSQINSIEDIKNFIEKYPEFRKLSGNVAKHMAIVGELDRQLKIKNIWEISEIEQNLSAHDANEEDFSDLIKLLQNEAVDKYYKLKLACIYSLNNQTSSDKIRQLVEILSQQLPPEDVNFFHKFKSLFSRQDKMTQSNHDKDDILTELARRFNSRMNSKSNTAENVYMQHIPEISSLLTDLSKNALFRDRFKEIDTQGHRVIGNQQSKDIPQDVILFVIGGVTYEEARLVHDFNGTMNNRMRVVLGGTSILSTKEYMDSIRSAK</sequence>
<dbReference type="EMBL" id="U07972">
    <property type="protein sequence ID" value="AAA79230.1"/>
    <property type="molecule type" value="Genomic_DNA"/>
</dbReference>
<dbReference type="EMBL" id="D28953">
    <property type="protein sequence ID" value="BAA06080.1"/>
    <property type="molecule type" value="Genomic_DNA"/>
</dbReference>
<dbReference type="EMBL" id="U11049">
    <property type="protein sequence ID" value="AAC48980.1"/>
    <property type="molecule type" value="Genomic_DNA"/>
</dbReference>
<dbReference type="EMBL" id="Z72617">
    <property type="protein sequence ID" value="CAA96801.1"/>
    <property type="molecule type" value="Genomic_DNA"/>
</dbReference>
<dbReference type="EMBL" id="BK006941">
    <property type="protein sequence ID" value="DAA08011.1"/>
    <property type="molecule type" value="Genomic_DNA"/>
</dbReference>
<dbReference type="PIR" id="S48542">
    <property type="entry name" value="S48542"/>
</dbReference>
<dbReference type="RefSeq" id="NP_011420.3">
    <property type="nucleotide sequence ID" value="NM_001180960.3"/>
</dbReference>
<dbReference type="SMR" id="P38932"/>
<dbReference type="BioGRID" id="33156">
    <property type="interactions" value="171"/>
</dbReference>
<dbReference type="DIP" id="DIP-2693N"/>
<dbReference type="FunCoup" id="P38932">
    <property type="interactions" value="973"/>
</dbReference>
<dbReference type="IntAct" id="P38932">
    <property type="interactions" value="15"/>
</dbReference>
<dbReference type="MINT" id="P38932"/>
<dbReference type="STRING" id="4932.YGL095C"/>
<dbReference type="iPTMnet" id="P38932"/>
<dbReference type="PaxDb" id="4932-YGL095C"/>
<dbReference type="PeptideAtlas" id="P38932"/>
<dbReference type="EnsemblFungi" id="YGL095C_mRNA">
    <property type="protein sequence ID" value="YGL095C"/>
    <property type="gene ID" value="YGL095C"/>
</dbReference>
<dbReference type="GeneID" id="852785"/>
<dbReference type="KEGG" id="sce:YGL095C"/>
<dbReference type="AGR" id="SGD:S000003063"/>
<dbReference type="SGD" id="S000003063">
    <property type="gene designation" value="VPS45"/>
</dbReference>
<dbReference type="VEuPathDB" id="FungiDB:YGL095C"/>
<dbReference type="eggNOG" id="KOG1299">
    <property type="taxonomic scope" value="Eukaryota"/>
</dbReference>
<dbReference type="GeneTree" id="ENSGT00550000075028"/>
<dbReference type="HOGENOM" id="CLU_013933_3_1_1"/>
<dbReference type="InParanoid" id="P38932"/>
<dbReference type="OMA" id="VHQLNNA"/>
<dbReference type="OrthoDB" id="10266265at2759"/>
<dbReference type="BioCyc" id="YEAST:G3O-30595-MONOMER"/>
<dbReference type="Reactome" id="R-SCE-983231">
    <property type="pathway name" value="Factors involved in megakaryocyte development and platelet production"/>
</dbReference>
<dbReference type="BioGRID-ORCS" id="852785">
    <property type="hits" value="0 hits in 10 CRISPR screens"/>
</dbReference>
<dbReference type="PRO" id="PR:P38932"/>
<dbReference type="Proteomes" id="UP000002311">
    <property type="component" value="Chromosome VII"/>
</dbReference>
<dbReference type="RNAct" id="P38932">
    <property type="molecule type" value="protein"/>
</dbReference>
<dbReference type="GO" id="GO:0005829">
    <property type="term" value="C:cytosol"/>
    <property type="evidence" value="ECO:0000314"/>
    <property type="project" value="SGD"/>
</dbReference>
<dbReference type="GO" id="GO:0000139">
    <property type="term" value="C:Golgi membrane"/>
    <property type="evidence" value="ECO:0000314"/>
    <property type="project" value="SGD"/>
</dbReference>
<dbReference type="GO" id="GO:0031201">
    <property type="term" value="C:SNARE complex"/>
    <property type="evidence" value="ECO:0000353"/>
    <property type="project" value="SGD"/>
</dbReference>
<dbReference type="GO" id="GO:0005774">
    <property type="term" value="C:vacuolar membrane"/>
    <property type="evidence" value="ECO:0007669"/>
    <property type="project" value="UniProtKB-SubCell"/>
</dbReference>
<dbReference type="GO" id="GO:0000149">
    <property type="term" value="F:SNARE binding"/>
    <property type="evidence" value="ECO:0000353"/>
    <property type="project" value="SGD"/>
</dbReference>
<dbReference type="GO" id="GO:0051082">
    <property type="term" value="F:unfolded protein binding"/>
    <property type="evidence" value="ECO:0000315"/>
    <property type="project" value="SGD"/>
</dbReference>
<dbReference type="GO" id="GO:0032258">
    <property type="term" value="P:cytoplasm to vacuole targeting by the Cvt pathway"/>
    <property type="evidence" value="ECO:0000315"/>
    <property type="project" value="SGD"/>
</dbReference>
<dbReference type="GO" id="GO:0006895">
    <property type="term" value="P:Golgi to endosome transport"/>
    <property type="evidence" value="ECO:0000316"/>
    <property type="project" value="SGD"/>
</dbReference>
<dbReference type="GO" id="GO:0006896">
    <property type="term" value="P:Golgi to vacuole transport"/>
    <property type="evidence" value="ECO:0000315"/>
    <property type="project" value="SGD"/>
</dbReference>
<dbReference type="GO" id="GO:0048210">
    <property type="term" value="P:Golgi vesicle fusion to target membrane"/>
    <property type="evidence" value="ECO:0000315"/>
    <property type="project" value="SGD"/>
</dbReference>
<dbReference type="GO" id="GO:0006886">
    <property type="term" value="P:intracellular protein transport"/>
    <property type="evidence" value="ECO:0000318"/>
    <property type="project" value="GO_Central"/>
</dbReference>
<dbReference type="GO" id="GO:0035543">
    <property type="term" value="P:positive regulation of SNARE complex assembly"/>
    <property type="evidence" value="ECO:0000315"/>
    <property type="project" value="SGD"/>
</dbReference>
<dbReference type="GO" id="GO:0006623">
    <property type="term" value="P:protein targeting to vacuole"/>
    <property type="evidence" value="ECO:0000315"/>
    <property type="project" value="SGD"/>
</dbReference>
<dbReference type="GO" id="GO:0007035">
    <property type="term" value="P:vacuolar acidification"/>
    <property type="evidence" value="ECO:0000315"/>
    <property type="project" value="SGD"/>
</dbReference>
<dbReference type="GO" id="GO:0000011">
    <property type="term" value="P:vacuole inheritance"/>
    <property type="evidence" value="ECO:0000315"/>
    <property type="project" value="SGD"/>
</dbReference>
<dbReference type="GO" id="GO:0007033">
    <property type="term" value="P:vacuole organization"/>
    <property type="evidence" value="ECO:0000315"/>
    <property type="project" value="SGD"/>
</dbReference>
<dbReference type="GO" id="GO:0016192">
    <property type="term" value="P:vesicle-mediated transport"/>
    <property type="evidence" value="ECO:0000318"/>
    <property type="project" value="GO_Central"/>
</dbReference>
<dbReference type="FunFam" id="3.40.50.2060:FF:000007">
    <property type="entry name" value="Vacuolar sorting protein"/>
    <property type="match status" value="1"/>
</dbReference>
<dbReference type="FunFam" id="3.90.830.10:FF:000009">
    <property type="entry name" value="Vacuolar sorting protein"/>
    <property type="match status" value="1"/>
</dbReference>
<dbReference type="Gene3D" id="1.25.40.60">
    <property type="match status" value="1"/>
</dbReference>
<dbReference type="Gene3D" id="3.40.50.1910">
    <property type="match status" value="1"/>
</dbReference>
<dbReference type="Gene3D" id="3.40.50.2060">
    <property type="match status" value="1"/>
</dbReference>
<dbReference type="Gene3D" id="3.90.830.10">
    <property type="entry name" value="Syntaxin Binding Protein 1, Chain A, domain 2"/>
    <property type="match status" value="1"/>
</dbReference>
<dbReference type="InterPro" id="IPR043154">
    <property type="entry name" value="Sec-1-like_dom1"/>
</dbReference>
<dbReference type="InterPro" id="IPR043127">
    <property type="entry name" value="Sec-1-like_dom3a"/>
</dbReference>
<dbReference type="InterPro" id="IPR001619">
    <property type="entry name" value="Sec1-like"/>
</dbReference>
<dbReference type="InterPro" id="IPR027482">
    <property type="entry name" value="Sec1-like_dom2"/>
</dbReference>
<dbReference type="InterPro" id="IPR036045">
    <property type="entry name" value="Sec1-like_sf"/>
</dbReference>
<dbReference type="PANTHER" id="PTHR11679">
    <property type="entry name" value="VESICLE PROTEIN SORTING-ASSOCIATED"/>
    <property type="match status" value="1"/>
</dbReference>
<dbReference type="Pfam" id="PF00995">
    <property type="entry name" value="Sec1"/>
    <property type="match status" value="1"/>
</dbReference>
<dbReference type="PIRSF" id="PIRSF005715">
    <property type="entry name" value="VPS45_Sec1"/>
    <property type="match status" value="1"/>
</dbReference>
<dbReference type="SUPFAM" id="SSF56815">
    <property type="entry name" value="Sec1/munc18-like (SM) proteins"/>
    <property type="match status" value="1"/>
</dbReference>
<comment type="function">
    <text evidence="4">Essential for vacuolar protein sorting. Function in membrane traffic between the Golgi and the vacuole.</text>
</comment>
<comment type="subunit">
    <text evidence="1 5">Interacts with PEP7 and TLG2.</text>
</comment>
<comment type="interaction">
    <interactant intactId="EBI-20444">
        <id>P38932</id>
    </interactant>
    <interactant intactId="EBI-20208">
        <id>P32609</id>
        <label>PEP7</label>
    </interactant>
    <organismsDiffer>false</organismsDiffer>
    <experiments>4</experiments>
</comment>
<comment type="interaction">
    <interactant intactId="EBI-20444">
        <id>P38932</id>
    </interactant>
    <interactant intactId="EBI-38705">
        <id>Q03322</id>
        <label>TLG1</label>
    </interactant>
    <organismsDiffer>false</organismsDiffer>
    <experiments>4</experiments>
</comment>
<comment type="interaction">
    <interactant intactId="EBI-20444">
        <id>P38932</id>
    </interactant>
    <interactant intactId="EBI-19302">
        <id>Q08144</id>
        <label>TLG2</label>
    </interactant>
    <organismsDiffer>false</organismsDiffer>
    <experiments>5</experiments>
</comment>
<comment type="subcellular location">
    <subcellularLocation>
        <location evidence="2">Cytoplasm</location>
    </subcellularLocation>
    <subcellularLocation>
        <location evidence="2">Vacuole membrane</location>
        <topology evidence="2">Peripheral membrane protein</topology>
        <orientation evidence="2">Cytoplasmic side</orientation>
    </subcellularLocation>
    <text>Cycles between the cytoplasmic side of the vacuolar membrane and the cytoplasm.</text>
</comment>
<comment type="miscellaneous">
    <text evidence="3">Present with 5660 molecules/cell in log phase SD medium.</text>
</comment>
<comment type="similarity">
    <text evidence="6">Belongs to the STXBP/unc-18/SEC1 family.</text>
</comment>
<evidence type="ECO:0000269" key="1">
    <source>
    </source>
</evidence>
<evidence type="ECO:0000269" key="2">
    <source>
    </source>
</evidence>
<evidence type="ECO:0000269" key="3">
    <source>
    </source>
</evidence>
<evidence type="ECO:0000269" key="4">
    <source>
    </source>
</evidence>
<evidence type="ECO:0000269" key="5">
    <source>
    </source>
</evidence>
<evidence type="ECO:0000305" key="6"/>
<keyword id="KW-0963">Cytoplasm</keyword>
<keyword id="KW-0472">Membrane</keyword>
<keyword id="KW-0653">Protein transport</keyword>
<keyword id="KW-1185">Reference proteome</keyword>
<keyword id="KW-0813">Transport</keyword>
<keyword id="KW-0926">Vacuole</keyword>
<accession>P38932</accession>
<accession>D6VU50</accession>
<gene>
    <name type="primary">VPS45</name>
    <name type="synonym">STT10</name>
    <name type="synonym">VPL28</name>
    <name type="ordered locus">YGL095C</name>
</gene>